<comment type="catalytic activity">
    <reaction evidence="1">
        <text>tRNA(Phe) + L-phenylalanine + ATP = L-phenylalanyl-tRNA(Phe) + AMP + diphosphate + H(+)</text>
        <dbReference type="Rhea" id="RHEA:19413"/>
        <dbReference type="Rhea" id="RHEA-COMP:9668"/>
        <dbReference type="Rhea" id="RHEA-COMP:9699"/>
        <dbReference type="ChEBI" id="CHEBI:15378"/>
        <dbReference type="ChEBI" id="CHEBI:30616"/>
        <dbReference type="ChEBI" id="CHEBI:33019"/>
        <dbReference type="ChEBI" id="CHEBI:58095"/>
        <dbReference type="ChEBI" id="CHEBI:78442"/>
        <dbReference type="ChEBI" id="CHEBI:78531"/>
        <dbReference type="ChEBI" id="CHEBI:456215"/>
        <dbReference type="EC" id="6.1.1.20"/>
    </reaction>
</comment>
<comment type="cofactor">
    <cofactor evidence="1">
        <name>Mg(2+)</name>
        <dbReference type="ChEBI" id="CHEBI:18420"/>
    </cofactor>
    <text evidence="1">Binds 2 magnesium ions per tetramer.</text>
</comment>
<comment type="subunit">
    <text evidence="1">Tetramer of two alpha and two beta subunits.</text>
</comment>
<comment type="subcellular location">
    <subcellularLocation>
        <location evidence="1">Cytoplasm</location>
    </subcellularLocation>
</comment>
<comment type="similarity">
    <text evidence="1">Belongs to the class-II aminoacyl-tRNA synthetase family. Phe-tRNA synthetase alpha subunit type 1 subfamily.</text>
</comment>
<feature type="chain" id="PRO_1000006851" description="Phenylalanine--tRNA ligase alpha subunit">
    <location>
        <begin position="1"/>
        <end position="345"/>
    </location>
</feature>
<feature type="binding site" evidence="1">
    <location>
        <position position="259"/>
    </location>
    <ligand>
        <name>Mg(2+)</name>
        <dbReference type="ChEBI" id="CHEBI:18420"/>
        <note>shared with beta subunit</note>
    </ligand>
</feature>
<reference key="1">
    <citation type="journal article" date="2006" name="Proc. Natl. Acad. Sci. U.S.A.">
        <title>Comparative genomics of the lactic acid bacteria.</title>
        <authorList>
            <person name="Makarova K.S."/>
            <person name="Slesarev A."/>
            <person name="Wolf Y.I."/>
            <person name="Sorokin A."/>
            <person name="Mirkin B."/>
            <person name="Koonin E.V."/>
            <person name="Pavlov A."/>
            <person name="Pavlova N."/>
            <person name="Karamychev V."/>
            <person name="Polouchine N."/>
            <person name="Shakhova V."/>
            <person name="Grigoriev I."/>
            <person name="Lou Y."/>
            <person name="Rohksar D."/>
            <person name="Lucas S."/>
            <person name="Huang K."/>
            <person name="Goodstein D.M."/>
            <person name="Hawkins T."/>
            <person name="Plengvidhya V."/>
            <person name="Welker D."/>
            <person name="Hughes J."/>
            <person name="Goh Y."/>
            <person name="Benson A."/>
            <person name="Baldwin K."/>
            <person name="Lee J.-H."/>
            <person name="Diaz-Muniz I."/>
            <person name="Dosti B."/>
            <person name="Smeianov V."/>
            <person name="Wechter W."/>
            <person name="Barabote R."/>
            <person name="Lorca G."/>
            <person name="Altermann E."/>
            <person name="Barrangou R."/>
            <person name="Ganesan B."/>
            <person name="Xie Y."/>
            <person name="Rawsthorne H."/>
            <person name="Tamir D."/>
            <person name="Parker C."/>
            <person name="Breidt F."/>
            <person name="Broadbent J.R."/>
            <person name="Hutkins R."/>
            <person name="O'Sullivan D."/>
            <person name="Steele J."/>
            <person name="Unlu G."/>
            <person name="Saier M.H. Jr."/>
            <person name="Klaenhammer T."/>
            <person name="Richardson P."/>
            <person name="Kozyavkin S."/>
            <person name="Weimer B.C."/>
            <person name="Mills D.A."/>
        </authorList>
    </citation>
    <scope>NUCLEOTIDE SEQUENCE [LARGE SCALE GENOMIC DNA]</scope>
    <source>
        <strain>SK11</strain>
    </source>
</reference>
<dbReference type="EC" id="6.1.1.20" evidence="1"/>
<dbReference type="EMBL" id="CP000425">
    <property type="protein sequence ID" value="ABJ73659.1"/>
    <property type="molecule type" value="Genomic_DNA"/>
</dbReference>
<dbReference type="RefSeq" id="WP_011676995.1">
    <property type="nucleotide sequence ID" value="NC_008527.1"/>
</dbReference>
<dbReference type="SMR" id="Q02WL3"/>
<dbReference type="KEGG" id="llc:LACR_2201"/>
<dbReference type="HOGENOM" id="CLU_025086_0_1_9"/>
<dbReference type="Proteomes" id="UP000000240">
    <property type="component" value="Chromosome"/>
</dbReference>
<dbReference type="GO" id="GO:0005737">
    <property type="term" value="C:cytoplasm"/>
    <property type="evidence" value="ECO:0007669"/>
    <property type="project" value="UniProtKB-SubCell"/>
</dbReference>
<dbReference type="GO" id="GO:0005524">
    <property type="term" value="F:ATP binding"/>
    <property type="evidence" value="ECO:0007669"/>
    <property type="project" value="UniProtKB-UniRule"/>
</dbReference>
<dbReference type="GO" id="GO:0140096">
    <property type="term" value="F:catalytic activity, acting on a protein"/>
    <property type="evidence" value="ECO:0007669"/>
    <property type="project" value="UniProtKB-ARBA"/>
</dbReference>
<dbReference type="GO" id="GO:0000287">
    <property type="term" value="F:magnesium ion binding"/>
    <property type="evidence" value="ECO:0007669"/>
    <property type="project" value="UniProtKB-UniRule"/>
</dbReference>
<dbReference type="GO" id="GO:0004826">
    <property type="term" value="F:phenylalanine-tRNA ligase activity"/>
    <property type="evidence" value="ECO:0007669"/>
    <property type="project" value="UniProtKB-UniRule"/>
</dbReference>
<dbReference type="GO" id="GO:0016740">
    <property type="term" value="F:transferase activity"/>
    <property type="evidence" value="ECO:0007669"/>
    <property type="project" value="UniProtKB-ARBA"/>
</dbReference>
<dbReference type="GO" id="GO:0000049">
    <property type="term" value="F:tRNA binding"/>
    <property type="evidence" value="ECO:0007669"/>
    <property type="project" value="InterPro"/>
</dbReference>
<dbReference type="GO" id="GO:0006432">
    <property type="term" value="P:phenylalanyl-tRNA aminoacylation"/>
    <property type="evidence" value="ECO:0007669"/>
    <property type="project" value="UniProtKB-UniRule"/>
</dbReference>
<dbReference type="CDD" id="cd00496">
    <property type="entry name" value="PheRS_alpha_core"/>
    <property type="match status" value="1"/>
</dbReference>
<dbReference type="FunFam" id="3.30.930.10:FF:000003">
    <property type="entry name" value="Phenylalanine--tRNA ligase alpha subunit"/>
    <property type="match status" value="1"/>
</dbReference>
<dbReference type="Gene3D" id="3.30.930.10">
    <property type="entry name" value="Bira Bifunctional Protein, Domain 2"/>
    <property type="match status" value="1"/>
</dbReference>
<dbReference type="HAMAP" id="MF_00281">
    <property type="entry name" value="Phe_tRNA_synth_alpha1"/>
    <property type="match status" value="1"/>
</dbReference>
<dbReference type="InterPro" id="IPR006195">
    <property type="entry name" value="aa-tRNA-synth_II"/>
</dbReference>
<dbReference type="InterPro" id="IPR045864">
    <property type="entry name" value="aa-tRNA-synth_II/BPL/LPL"/>
</dbReference>
<dbReference type="InterPro" id="IPR004529">
    <property type="entry name" value="Phe-tRNA-synth_IIc_asu"/>
</dbReference>
<dbReference type="InterPro" id="IPR004188">
    <property type="entry name" value="Phe-tRNA_ligase_II_N"/>
</dbReference>
<dbReference type="InterPro" id="IPR022911">
    <property type="entry name" value="Phe_tRNA_ligase_alpha1_bac"/>
</dbReference>
<dbReference type="InterPro" id="IPR002319">
    <property type="entry name" value="Phenylalanyl-tRNA_Synthase"/>
</dbReference>
<dbReference type="InterPro" id="IPR010978">
    <property type="entry name" value="tRNA-bd_arm"/>
</dbReference>
<dbReference type="NCBIfam" id="TIGR00468">
    <property type="entry name" value="pheS"/>
    <property type="match status" value="1"/>
</dbReference>
<dbReference type="PANTHER" id="PTHR11538:SF41">
    <property type="entry name" value="PHENYLALANINE--TRNA LIGASE, MITOCHONDRIAL"/>
    <property type="match status" value="1"/>
</dbReference>
<dbReference type="PANTHER" id="PTHR11538">
    <property type="entry name" value="PHENYLALANYL-TRNA SYNTHETASE"/>
    <property type="match status" value="1"/>
</dbReference>
<dbReference type="Pfam" id="PF02912">
    <property type="entry name" value="Phe_tRNA-synt_N"/>
    <property type="match status" value="1"/>
</dbReference>
<dbReference type="Pfam" id="PF01409">
    <property type="entry name" value="tRNA-synt_2d"/>
    <property type="match status" value="1"/>
</dbReference>
<dbReference type="SUPFAM" id="SSF55681">
    <property type="entry name" value="Class II aaRS and biotin synthetases"/>
    <property type="match status" value="1"/>
</dbReference>
<dbReference type="SUPFAM" id="SSF46589">
    <property type="entry name" value="tRNA-binding arm"/>
    <property type="match status" value="1"/>
</dbReference>
<dbReference type="PROSITE" id="PS50862">
    <property type="entry name" value="AA_TRNA_LIGASE_II"/>
    <property type="match status" value="1"/>
</dbReference>
<keyword id="KW-0030">Aminoacyl-tRNA synthetase</keyword>
<keyword id="KW-0067">ATP-binding</keyword>
<keyword id="KW-0963">Cytoplasm</keyword>
<keyword id="KW-0436">Ligase</keyword>
<keyword id="KW-0460">Magnesium</keyword>
<keyword id="KW-0479">Metal-binding</keyword>
<keyword id="KW-0547">Nucleotide-binding</keyword>
<keyword id="KW-0648">Protein biosynthesis</keyword>
<sequence>MNLQEKIEDLRKRTLSDLLSVADEKTLNNLRTVMLGKKGELTEILKGMKDLTNEERPVIGALANAFRDEFGAKFEAKKLEIEQAVMNAALESESLDVTLPGKAQKKGSRHILTQTQEEIEEIFLGMGYEIVDGYEVETDHYNFERMNLPKDHPARDMQDTFYITNEVLLRTHTSPMQARTMDAHDFSKGGLRMIAPGRVYRRDTDDATHSHQFHQIEGLVVDKNITMADLKGTLDLVMKKMFGQERELRWRPSYFPFTEPSVEVDISCFKCGGKGCNVCKHTGWIEILGAGMVHPNVLEMSGLDSSVYSGFAFGLGQERIAMLRYGINDIRGFYQGDVRFLEQFD</sequence>
<accession>Q02WL3</accession>
<organism>
    <name type="scientific">Lactococcus lactis subsp. cremoris (strain SK11)</name>
    <dbReference type="NCBI Taxonomy" id="272622"/>
    <lineage>
        <taxon>Bacteria</taxon>
        <taxon>Bacillati</taxon>
        <taxon>Bacillota</taxon>
        <taxon>Bacilli</taxon>
        <taxon>Lactobacillales</taxon>
        <taxon>Streptococcaceae</taxon>
        <taxon>Lactococcus</taxon>
        <taxon>Lactococcus cremoris subsp. cremoris</taxon>
    </lineage>
</organism>
<protein>
    <recommendedName>
        <fullName evidence="1">Phenylalanine--tRNA ligase alpha subunit</fullName>
        <ecNumber evidence="1">6.1.1.20</ecNumber>
    </recommendedName>
    <alternativeName>
        <fullName evidence="1">Phenylalanyl-tRNA synthetase alpha subunit</fullName>
        <shortName evidence="1">PheRS</shortName>
    </alternativeName>
</protein>
<evidence type="ECO:0000255" key="1">
    <source>
        <dbReference type="HAMAP-Rule" id="MF_00281"/>
    </source>
</evidence>
<proteinExistence type="inferred from homology"/>
<gene>
    <name evidence="1" type="primary">pheS</name>
    <name type="ordered locus">LACR_2201</name>
</gene>
<name>SYFA_LACLS</name>